<sequence length="284" mass="31497">MLLATFKLCAGSSYRHLRNMKGLRHQAVLAIGQELNRRTLGDSSPGWISQVRRRSSLLGSQLEAALYSEQELSYIQQGEVAMQKALSILSNQEGWKKENQQENGDEVLSKVVPDVGKVFRLEVVVDQPMDRLYAELVDRMEAMGEWNPNVKEIKVLQKIGKDTVITHELAAAAAGNLVGPRDFVSVRCAKRRGSTCVLAGIATHFGEMPEQSGVIRAEQGPTCMVLHPLAGSPSKTKFTWLLSIDLKGWLPKSIINQVLSQTQMEFANHLRKRLESSSASEARC</sequence>
<feature type="transit peptide" description="Mitochondrion" evidence="1">
    <location>
        <begin position="1"/>
        <end position="62"/>
    </location>
</feature>
<feature type="chain" id="PRO_0000033317" description="Steroidogenic acute regulatory protein, mitochondrial">
    <location>
        <begin position="63"/>
        <end position="284"/>
    </location>
</feature>
<feature type="domain" description="START" evidence="3">
    <location>
        <begin position="66"/>
        <end position="279"/>
    </location>
</feature>
<feature type="modified residue" description="Phosphoserine; by PKA" evidence="2">
    <location>
        <position position="56"/>
    </location>
</feature>
<feature type="modified residue" description="Phosphoserine; by PKA" evidence="2">
    <location>
        <position position="194"/>
    </location>
</feature>
<keyword id="KW-0445">Lipid transport</keyword>
<keyword id="KW-0446">Lipid-binding</keyword>
<keyword id="KW-0496">Mitochondrion</keyword>
<keyword id="KW-0597">Phosphoprotein</keyword>
<keyword id="KW-1185">Reference proteome</keyword>
<keyword id="KW-0755">Steroidogenesis</keyword>
<keyword id="KW-0809">Transit peptide</keyword>
<keyword id="KW-0813">Transport</keyword>
<organism>
    <name type="scientific">Mesocricetus auratus</name>
    <name type="common">Golden hamster</name>
    <dbReference type="NCBI Taxonomy" id="10036"/>
    <lineage>
        <taxon>Eukaryota</taxon>
        <taxon>Metazoa</taxon>
        <taxon>Chordata</taxon>
        <taxon>Craniata</taxon>
        <taxon>Vertebrata</taxon>
        <taxon>Euteleostomi</taxon>
        <taxon>Mammalia</taxon>
        <taxon>Eutheria</taxon>
        <taxon>Euarchontoglires</taxon>
        <taxon>Glires</taxon>
        <taxon>Rodentia</taxon>
        <taxon>Myomorpha</taxon>
        <taxon>Muroidea</taxon>
        <taxon>Cricetidae</taxon>
        <taxon>Cricetinae</taxon>
        <taxon>Mesocricetus</taxon>
    </lineage>
</organism>
<protein>
    <recommendedName>
        <fullName>Steroidogenic acute regulatory protein, mitochondrial</fullName>
        <shortName>StAR</shortName>
    </recommendedName>
    <alternativeName>
        <fullName>START domain-containing protein 1</fullName>
        <shortName>StARD1</shortName>
    </alternativeName>
</protein>
<evidence type="ECO:0000250" key="1"/>
<evidence type="ECO:0000250" key="2">
    <source>
        <dbReference type="UniProtKB" id="P49675"/>
    </source>
</evidence>
<evidence type="ECO:0000255" key="3">
    <source>
        <dbReference type="PROSITE-ProRule" id="PRU00197"/>
    </source>
</evidence>
<comment type="function">
    <text evidence="1">Plays a key role in steroid hormone synthesis by enhancing the metabolism of cholesterol into pregnenolone. Mediates the transfer of cholesterol from the outer mitochondrial membrane to the inner mitochondrial membrane where it is cleaved to pregnenolone (By similarity).</text>
</comment>
<comment type="pathway">
    <text>Steroid metabolism; cholesterol metabolism.</text>
</comment>
<comment type="subunit">
    <text evidence="1">May interact with TSPO.</text>
</comment>
<comment type="subcellular location">
    <subcellularLocation>
        <location>Mitochondrion</location>
    </subcellularLocation>
</comment>
<proteinExistence type="evidence at transcript level"/>
<accession>P70114</accession>
<name>STAR_MESAU</name>
<gene>
    <name type="primary">STAR</name>
</gene>
<dbReference type="EMBL" id="U66490">
    <property type="protein sequence ID" value="AAB06763.1"/>
    <property type="molecule type" value="mRNA"/>
</dbReference>
<dbReference type="RefSeq" id="NP_001268611.1">
    <property type="nucleotide sequence ID" value="NM_001281682.1"/>
</dbReference>
<dbReference type="SMR" id="P70114"/>
<dbReference type="STRING" id="10036.ENSMAUP00000018993"/>
<dbReference type="iPTMnet" id="P70114"/>
<dbReference type="Ensembl" id="ENSMAUT00000022964">
    <property type="protein sequence ID" value="ENSMAUP00000018993"/>
    <property type="gene ID" value="ENSMAUG00000017407"/>
</dbReference>
<dbReference type="GeneID" id="101844174"/>
<dbReference type="KEGG" id="maua:101844174"/>
<dbReference type="CTD" id="6770"/>
<dbReference type="eggNOG" id="KOG3845">
    <property type="taxonomic scope" value="Eukaryota"/>
</dbReference>
<dbReference type="OrthoDB" id="74575at2759"/>
<dbReference type="UniPathway" id="UPA00296"/>
<dbReference type="Proteomes" id="UP000189706">
    <property type="component" value="Unplaced"/>
</dbReference>
<dbReference type="GO" id="GO:0005739">
    <property type="term" value="C:mitochondrion"/>
    <property type="evidence" value="ECO:0007669"/>
    <property type="project" value="UniProtKB-SubCell"/>
</dbReference>
<dbReference type="GO" id="GO:0015485">
    <property type="term" value="F:cholesterol binding"/>
    <property type="evidence" value="ECO:0007669"/>
    <property type="project" value="Ensembl"/>
</dbReference>
<dbReference type="GO" id="GO:0120020">
    <property type="term" value="F:cholesterol transfer activity"/>
    <property type="evidence" value="ECO:0007669"/>
    <property type="project" value="InterPro"/>
</dbReference>
<dbReference type="GO" id="GO:0008203">
    <property type="term" value="P:cholesterol metabolic process"/>
    <property type="evidence" value="ECO:0007669"/>
    <property type="project" value="UniProtKB-UniPathway"/>
</dbReference>
<dbReference type="GO" id="GO:0008211">
    <property type="term" value="P:glucocorticoid metabolic process"/>
    <property type="evidence" value="ECO:0007669"/>
    <property type="project" value="Ensembl"/>
</dbReference>
<dbReference type="GO" id="GO:0032367">
    <property type="term" value="P:intracellular cholesterol transport"/>
    <property type="evidence" value="ECO:0007669"/>
    <property type="project" value="TreeGrafter"/>
</dbReference>
<dbReference type="GO" id="GO:0070859">
    <property type="term" value="P:positive regulation of bile acid biosynthetic process"/>
    <property type="evidence" value="ECO:0007669"/>
    <property type="project" value="Ensembl"/>
</dbReference>
<dbReference type="GO" id="GO:0006694">
    <property type="term" value="P:steroid biosynthetic process"/>
    <property type="evidence" value="ECO:0007669"/>
    <property type="project" value="UniProtKB-KW"/>
</dbReference>
<dbReference type="CDD" id="cd08905">
    <property type="entry name" value="START_STARD1-like"/>
    <property type="match status" value="1"/>
</dbReference>
<dbReference type="FunFam" id="3.30.530.20:FF:000015">
    <property type="entry name" value="Steroidogenic acute regulatory protein, mitochondrial"/>
    <property type="match status" value="1"/>
</dbReference>
<dbReference type="Gene3D" id="3.30.530.20">
    <property type="match status" value="1"/>
</dbReference>
<dbReference type="InterPro" id="IPR029866">
    <property type="entry name" value="StAR"/>
</dbReference>
<dbReference type="InterPro" id="IPR000799">
    <property type="entry name" value="StAR-like"/>
</dbReference>
<dbReference type="InterPro" id="IPR023393">
    <property type="entry name" value="START-like_dom_sf"/>
</dbReference>
<dbReference type="InterPro" id="IPR002913">
    <property type="entry name" value="START_lipid-bd_dom"/>
</dbReference>
<dbReference type="PANTHER" id="PTHR46489">
    <property type="entry name" value="STEROIDOGENIC ACUTE REGULATORY PROTEIN, MITOCHONDRIAL"/>
    <property type="match status" value="1"/>
</dbReference>
<dbReference type="PANTHER" id="PTHR46489:SF1">
    <property type="entry name" value="STEROIDOGENIC ACUTE REGULATORY PROTEIN, MITOCHONDRIAL"/>
    <property type="match status" value="1"/>
</dbReference>
<dbReference type="Pfam" id="PF01852">
    <property type="entry name" value="START"/>
    <property type="match status" value="1"/>
</dbReference>
<dbReference type="PRINTS" id="PR00978">
    <property type="entry name" value="STARPROTEIN"/>
</dbReference>
<dbReference type="SMART" id="SM00234">
    <property type="entry name" value="START"/>
    <property type="match status" value="1"/>
</dbReference>
<dbReference type="SUPFAM" id="SSF55961">
    <property type="entry name" value="Bet v1-like"/>
    <property type="match status" value="1"/>
</dbReference>
<dbReference type="PROSITE" id="PS50848">
    <property type="entry name" value="START"/>
    <property type="match status" value="1"/>
</dbReference>
<reference key="1">
    <citation type="journal article" date="1996" name="Endocr. Res.">
        <title>Adrenocorticotropin regulates the level of the steroidogenic acute regulatory (StAR) protein mRNA in hamster adrenals.</title>
        <authorList>
            <person name="Fleury A."/>
            <person name="Cloutier M."/>
            <person name="Ducharme L."/>
            <person name="Lefebvre A."/>
            <person name="LeHoux J."/>
            <person name="Lehoux J.-G."/>
        </authorList>
    </citation>
    <scope>NUCLEOTIDE SEQUENCE [MRNA]</scope>
    <source>
        <tissue>Adrenal gland</tissue>
    </source>
</reference>